<dbReference type="EMBL" id="DQ990875">
    <property type="protein sequence ID" value="ABL74005.1"/>
    <property type="molecule type" value="Genomic_DNA"/>
</dbReference>
<dbReference type="RefSeq" id="WP_014713988.1">
    <property type="nucleotide sequence ID" value="NZ_JYPA01000019.1"/>
</dbReference>
<dbReference type="SMR" id="A1C3M0"/>
<dbReference type="IntAct" id="A1C3M0">
    <property type="interactions" value="1"/>
</dbReference>
<dbReference type="CAZy" id="GT8">
    <property type="family name" value="Glycosyltransferase Family 8"/>
</dbReference>
<dbReference type="UniPathway" id="UPA00378"/>
<dbReference type="GO" id="GO:0005886">
    <property type="term" value="C:plasma membrane"/>
    <property type="evidence" value="ECO:0007669"/>
    <property type="project" value="UniProtKB-SubCell"/>
</dbReference>
<dbReference type="GO" id="GO:0017122">
    <property type="term" value="C:protein N-acetylglucosaminyltransferase complex"/>
    <property type="evidence" value="ECO:0000314"/>
    <property type="project" value="CACAO"/>
</dbReference>
<dbReference type="GO" id="GO:0018242">
    <property type="term" value="P:protein O-linked glycosylation via serine"/>
    <property type="evidence" value="ECO:0007669"/>
    <property type="project" value="UniProtKB-UniRule"/>
</dbReference>
<dbReference type="GO" id="GO:0031647">
    <property type="term" value="P:regulation of protein stability"/>
    <property type="evidence" value="ECO:0000314"/>
    <property type="project" value="UniProtKB"/>
</dbReference>
<dbReference type="HAMAP" id="MF_01473">
    <property type="entry name" value="GtfB"/>
    <property type="match status" value="1"/>
</dbReference>
<dbReference type="InterPro" id="IPR014268">
    <property type="entry name" value="GtfB"/>
</dbReference>
<dbReference type="NCBIfam" id="TIGR02919">
    <property type="entry name" value="accessory Sec system glycosylation chaperone GtfB"/>
    <property type="match status" value="1"/>
</dbReference>
<gene>
    <name evidence="1" type="primary">gtfB</name>
    <name evidence="5" type="synonym">gtf2</name>
</gene>
<proteinExistence type="evidence at protein level"/>
<accession>A1C3M0</accession>
<keyword id="KW-1003">Cell membrane</keyword>
<keyword id="KW-0903">Direct protein sequencing</keyword>
<keyword id="KW-0472">Membrane</keyword>
<name>GTFB_STRPA</name>
<comment type="function">
    <text evidence="2 3 4">Required for the polymorphic O-glycosylation of the serine-rich repeat protein Fap1. A stabilizing protein that is part of the accessory SecA2/SecY2 system specifically required to export Fap1, a serine-rich fimbrial adhesin encoded upstream in the same operon. The GtfA-GtfB (Gtf1-Gtf2 in this bacteria) complex adds GlcNAc from UDP-GlcNAc to Fap1, attaching the first sugar residue. Cannot use not UDP-Glc as substrate. Stabilizes the glycosylation activity of GtfA, causing it to partially localize to the cellular membrane where it is more protease resistant.</text>
</comment>
<comment type="pathway">
    <text evidence="1 2 3 4">Protein modification; protein glycosylation.</text>
</comment>
<comment type="subunit">
    <text evidence="1 2 3">Interacts with glycosyltransferase GtfA (Gtf2); probably forms a heterotetramer with 2 subunits each of GtfA and GtfB. Part of the accessory SecA2/SecY2 protein translocation apparatus.</text>
</comment>
<comment type="interaction">
    <interactant intactId="EBI-6401543">
        <id>A1C3M0</id>
    </interactant>
    <interactant intactId="EBI-6401548">
        <id>A1C3L9</id>
        <label>gtfA</label>
    </interactant>
    <organismsDiffer>false</organismsDiffer>
    <experiments>6</experiments>
</comment>
<comment type="subcellular location">
    <subcellularLocation>
        <location evidence="7">Cell membrane</location>
        <topology evidence="7">Peripheral membrane protein</topology>
    </subcellularLocation>
</comment>
<comment type="disruption phenotype">
    <text evidence="2 4">No glycosylation of serine-rich fimbrial adhesin Fap1. The unglycosylated version of Fap1 accumulates which is larger than the wild-type protein. In a deletion mutant, GtfA (Gtf1) is less stable in vivo, no longer associates with the cell membrane and has an increased protease susceptibility. Biofilm formation decreases. In a double gftA/gtfB (gtf1/gtf2) mutant, there is no further affect on glycosylation but biofilm formation is further decreased.</text>
</comment>
<comment type="similarity">
    <text evidence="6">Belongs to the GtfB family.</text>
</comment>
<organism>
    <name type="scientific">Streptococcus parasanguinis</name>
    <dbReference type="NCBI Taxonomy" id="1318"/>
    <lineage>
        <taxon>Bacteria</taxon>
        <taxon>Bacillati</taxon>
        <taxon>Bacillota</taxon>
        <taxon>Bacilli</taxon>
        <taxon>Lactobacillales</taxon>
        <taxon>Streptococcaceae</taxon>
        <taxon>Streptococcus</taxon>
    </lineage>
</organism>
<sequence>MIRLFEWLTQESLDLHYSLEESGIHGTSIVLNDDGFLPEGIISPYTFFCEVEMDGSPLYFNQLEVPYLWQITGTNIEGEIWNRSSKRGVIHYHEPKYLRFVQSVDWLYPDGSIYMTDHYNKYGWAFARTYFFSDQQVSHKKYYTKSGQEVLSENILTGDILLNWKGKVYHFTKKVDFFLFYFKKSGLDLSSIWYNSLGMPFLISYYLGGEGRDILFWQENLADQLPGNMQIIFSGRTSRTKKVIVQDRSVYKKLLHLVEEKNKEMISFLNIIYPKLRENYSRKEILIVTNSDQIEGIETLTDNLSAYTFHIGALTSMSDKLQNIGQKENVLLYPNMSPKTMLDLLEQCDIYLDINHGNEVLSIVRLAFERSLLILAYDNTVHSPIFHHESGIFNHSKPQTLSDWLLNLDDYSQTVSCWRSDLFPMTYRDYKQVLVSNVD</sequence>
<feature type="chain" id="PRO_0000418642" description="UDP-N-acetylglucosamine--peptide N-acetylglucosaminyltransferase stabilizing protein GtfB">
    <location>
        <begin position="1"/>
        <end position="439"/>
    </location>
</feature>
<feature type="mutagenesis site" description="Loss of Fap1 glycosylation, decreased association of GtfA with the cell membrane. Reduced GtfB levels." evidence="4">
    <location>
        <begin position="35"/>
        <end position="38"/>
    </location>
</feature>
<feature type="mutagenesis site" description="Loss of Fap1 glycosylation, reduced GtfA-GtfB interaction, about 18% Fap1 glycosylation, loss of GtfA and Fap1 stability in vivo, decreased association of GtfA with the cell membrane." evidence="4">
    <location>
        <begin position="57"/>
        <end position="60"/>
    </location>
</feature>
<feature type="mutagenesis site" description="Loss of Fap1 glycosylation, reduced GtfA-GtfB interaction, about 20% Fap1 glycosylation, decreased association of GtfA with the cell membrane." evidence="4">
    <location>
        <begin position="61"/>
        <end position="64"/>
    </location>
</feature>
<feature type="mutagenesis site" description="Loss of Fap1 glycosylation, decreased association of GtfA with the cell membrane. Reduced GtfB levels." evidence="4">
    <location>
        <begin position="148"/>
        <end position="151"/>
    </location>
</feature>
<feature type="mutagenesis site" description="Loss of Fap1 glycosylation, decreased association of GtfA with the cell membrane. Reduced GtfB levels." evidence="4">
    <location>
        <begin position="159"/>
        <end position="162"/>
    </location>
</feature>
<feature type="mutagenesis site" description="Wild-type Fap1 glycosylation, no reduction in GtfA-GtfB interaction, about 69% Fap1 glycosylation." evidence="4">
    <location>
        <begin position="315"/>
        <end position="318"/>
    </location>
</feature>
<reference key="1">
    <citation type="journal article" date="2007" name="J. Bacteriol.">
        <title>Two gene determinants are differentially involved in the biogenesis of Fap1 precursors in Streptococcus parasanguis.</title>
        <authorList>
            <person name="Wu H."/>
            <person name="Bu S."/>
            <person name="Newell P."/>
            <person name="Chen Q."/>
            <person name="Fives-Taylor P."/>
        </authorList>
    </citation>
    <scope>NUCLEOTIDE SEQUENCE [GENOMIC DNA]</scope>
    <source>
        <strain>FW213</strain>
    </source>
</reference>
<reference key="2">
    <citation type="journal article" date="2010" name="Appl. Environ. Microbiol.">
        <title>Purification and characterization of an active N-acetylglucosaminyltransferase enzyme complex from Streptococci.</title>
        <authorList>
            <person name="Wu R."/>
            <person name="Zhou M."/>
            <person name="Wu H."/>
        </authorList>
    </citation>
    <scope>PROTEIN SEQUENCE OF 87-96; 129-140; 166-173; 175-183; 213-236; 254-261; 276-282; 328-339 AND 420-428</scope>
    <scope>FUNCTION IN GLYCOSYLATION OF FAP1</scope>
    <scope>PATHWAY</scope>
    <scope>SUBUNIT</scope>
    <source>
        <strain>FW213</strain>
    </source>
</reference>
<reference key="3">
    <citation type="journal article" date="2008" name="J. Bacteriol.">
        <title>Interaction between two putative glycosyltransferases is required for glycosylation of a serine-rich streptococcal adhesin.</title>
        <authorList>
            <person name="Bu S."/>
            <person name="Li Y."/>
            <person name="Zhou M."/>
            <person name="Azadin P."/>
            <person name="Zeng M."/>
            <person name="Fives-Taylor P."/>
            <person name="Wu H."/>
        </authorList>
    </citation>
    <scope>PROTEIN SEQUENCE OF 100-121; 131-141; 174-184; 254-261; 268-275 AND 327-339</scope>
    <scope>FUNCTION IN GLYCOSYLATION OF FAP1</scope>
    <scope>PATHWAY</scope>
    <scope>INTERACTION WITH GTFA</scope>
    <scope>DISRUPTION PHENOTYPE</scope>
    <source>
        <strain>FW213</strain>
    </source>
</reference>
<reference key="4">
    <citation type="journal article" date="2011" name="J. Biol. Chem.">
        <title>A molecular chaperone mediates a two-protein enzyme complex and glycosylation of serine-rich streptococcal adhesins.</title>
        <authorList>
            <person name="Wu R."/>
            <person name="Wu H."/>
        </authorList>
    </citation>
    <scope>FUNCTION AS A STABILIZING PROTEIN</scope>
    <scope>PATHWAY</scope>
    <scope>SUBCELLULAR LOCATION</scope>
    <scope>DISRUPTION PHENOTYPE</scope>
    <scope>MUTAGENESIS OF 35-GLY--PRO-38; 57-PRO--PHE-60; 61-ASN--ASP-64; 148-GLN--LEU-151; 159-ASP--LEU-162 AND 315-THR--SER-318</scope>
    <source>
        <strain>FW213</strain>
    </source>
</reference>
<protein>
    <recommendedName>
        <fullName evidence="1">UDP-N-acetylglucosamine--peptide N-acetylglucosaminyltransferase stabilizing protein GtfB</fullName>
    </recommendedName>
    <alternativeName>
        <fullName>Glycosyltransferase chaperone Gtf2</fullName>
    </alternativeName>
    <alternativeName>
        <fullName evidence="1">Glycosyltransferase stabilizing protein GtfB</fullName>
    </alternativeName>
    <alternativeName>
        <fullName evidence="5">Glycosyltransferase-stabilizing protein Gtf2</fullName>
    </alternativeName>
</protein>
<evidence type="ECO:0000255" key="1">
    <source>
        <dbReference type="HAMAP-Rule" id="MF_01473"/>
    </source>
</evidence>
<evidence type="ECO:0000269" key="2">
    <source>
    </source>
</evidence>
<evidence type="ECO:0000269" key="3">
    <source>
    </source>
</evidence>
<evidence type="ECO:0000269" key="4">
    <source>
    </source>
</evidence>
<evidence type="ECO:0000303" key="5">
    <source>
    </source>
</evidence>
<evidence type="ECO:0000305" key="6"/>
<evidence type="ECO:0000305" key="7">
    <source>
    </source>
</evidence>